<reference key="1">
    <citation type="journal article" date="1998" name="J. Med. Virol.">
        <title>Serological and genomic characterization of human rotaviruses detected in China.</title>
        <authorList>
            <person name="Wu H."/>
            <person name="Taniguchi K."/>
            <person name="Urasawa T."/>
            <person name="Urasawa S."/>
        </authorList>
    </citation>
    <scope>NUCLEOTIDE SEQUENCE [MRNA]</scope>
</reference>
<name>NSP6_ROTH3</name>
<comment type="subunit">
    <text evidence="1">Interacts with NSP2 and NSP5.</text>
</comment>
<comment type="subcellular location">
    <subcellularLocation>
        <location evidence="1">Host cytoplasm</location>
    </subcellularLocation>
    <subcellularLocation>
        <location evidence="1">Host mitochondrion</location>
    </subcellularLocation>
    <text evidence="1">Found in spherical cytoplasmic structures, called viral factories, that appear early after infection and are the site of viral replication and packaging.</text>
</comment>
<comment type="similarity">
    <text evidence="1">Belongs to the rotavirus A NSP6 family.</text>
</comment>
<dbReference type="EMBL" id="AB008656">
    <property type="status" value="NOT_ANNOTATED_CDS"/>
    <property type="molecule type" value="mRNA"/>
</dbReference>
<dbReference type="SMR" id="P0C713"/>
<dbReference type="Proteomes" id="UP000001454">
    <property type="component" value="Genome"/>
</dbReference>
<dbReference type="GO" id="GO:0033650">
    <property type="term" value="C:host cell mitochondrion"/>
    <property type="evidence" value="ECO:0007669"/>
    <property type="project" value="UniProtKB-SubCell"/>
</dbReference>
<dbReference type="HAMAP" id="MF_04093">
    <property type="entry name" value="ROTA_NSP6"/>
    <property type="match status" value="1"/>
</dbReference>
<dbReference type="InterPro" id="IPR006950">
    <property type="entry name" value="Rotavirus_NSP6"/>
</dbReference>
<dbReference type="Pfam" id="PF04866">
    <property type="entry name" value="Rota_NS6"/>
    <property type="match status" value="1"/>
</dbReference>
<proteinExistence type="inferred from homology"/>
<sequence length="74" mass="8839">MNHLQQRQLFLENLLVGVNNTFHQMQKRSVSTCCQSLQKILDHLILLQTIHSPVFRLDRMQLRQMQTLACLWIH</sequence>
<organismHost>
    <name type="scientific">Homo sapiens</name>
    <name type="common">Human</name>
    <dbReference type="NCBI Taxonomy" id="9606"/>
</organismHost>
<organism>
    <name type="scientific">Rotavirus A (strain RVA/Human/Japan/AU-1/1982/G3P3[9])</name>
    <name type="common">RV-A</name>
    <dbReference type="NCBI Taxonomy" id="39013"/>
    <lineage>
        <taxon>Viruses</taxon>
        <taxon>Riboviria</taxon>
        <taxon>Orthornavirae</taxon>
        <taxon>Duplornaviricota</taxon>
        <taxon>Resentoviricetes</taxon>
        <taxon>Reovirales</taxon>
        <taxon>Sedoreoviridae</taxon>
        <taxon>Rotavirus</taxon>
        <taxon>Rotavirus A</taxon>
    </lineage>
</organism>
<accession>P0C713</accession>
<keyword id="KW-1035">Host cytoplasm</keyword>
<keyword id="KW-1045">Host mitochondrion</keyword>
<evidence type="ECO:0000255" key="1">
    <source>
        <dbReference type="HAMAP-Rule" id="MF_04093"/>
    </source>
</evidence>
<protein>
    <recommendedName>
        <fullName evidence="1">Non-structural protein 6</fullName>
        <shortName evidence="1">NSP6</shortName>
    </recommendedName>
</protein>
<feature type="chain" id="PRO_0000369518" description="Non-structural protein 6">
    <location>
        <begin position="1"/>
        <end position="74"/>
    </location>
</feature>